<keyword id="KW-0963">Cytoplasm</keyword>
<keyword id="KW-0448">Lipopolysaccharide biosynthesis</keyword>
<keyword id="KW-0548">Nucleotidyltransferase</keyword>
<keyword id="KW-0808">Transferase</keyword>
<accession>A1JMK9</accession>
<name>KDSB_YERE8</name>
<proteinExistence type="inferred from homology"/>
<evidence type="ECO:0000255" key="1">
    <source>
        <dbReference type="HAMAP-Rule" id="MF_00057"/>
    </source>
</evidence>
<dbReference type="EC" id="2.7.7.38" evidence="1"/>
<dbReference type="EMBL" id="AM286415">
    <property type="protein sequence ID" value="CAL11628.1"/>
    <property type="molecule type" value="Genomic_DNA"/>
</dbReference>
<dbReference type="RefSeq" id="WP_011816038.1">
    <property type="nucleotide sequence ID" value="NC_008800.1"/>
</dbReference>
<dbReference type="RefSeq" id="YP_001005844.1">
    <property type="nucleotide sequence ID" value="NC_008800.1"/>
</dbReference>
<dbReference type="SMR" id="A1JMK9"/>
<dbReference type="KEGG" id="yen:YE1550"/>
<dbReference type="PATRIC" id="fig|393305.7.peg.1677"/>
<dbReference type="eggNOG" id="COG1212">
    <property type="taxonomic scope" value="Bacteria"/>
</dbReference>
<dbReference type="HOGENOM" id="CLU_065038_1_0_6"/>
<dbReference type="OrthoDB" id="9815559at2"/>
<dbReference type="UniPathway" id="UPA00030"/>
<dbReference type="UniPathway" id="UPA00358">
    <property type="reaction ID" value="UER00476"/>
</dbReference>
<dbReference type="Proteomes" id="UP000000642">
    <property type="component" value="Chromosome"/>
</dbReference>
<dbReference type="GO" id="GO:0005829">
    <property type="term" value="C:cytosol"/>
    <property type="evidence" value="ECO:0007669"/>
    <property type="project" value="TreeGrafter"/>
</dbReference>
<dbReference type="GO" id="GO:0008690">
    <property type="term" value="F:3-deoxy-manno-octulosonate cytidylyltransferase activity"/>
    <property type="evidence" value="ECO:0007669"/>
    <property type="project" value="UniProtKB-UniRule"/>
</dbReference>
<dbReference type="GO" id="GO:0033468">
    <property type="term" value="P:CMP-keto-3-deoxy-D-manno-octulosonic acid biosynthetic process"/>
    <property type="evidence" value="ECO:0007669"/>
    <property type="project" value="UniProtKB-UniRule"/>
</dbReference>
<dbReference type="GO" id="GO:0009103">
    <property type="term" value="P:lipopolysaccharide biosynthetic process"/>
    <property type="evidence" value="ECO:0007669"/>
    <property type="project" value="UniProtKB-UniRule"/>
</dbReference>
<dbReference type="CDD" id="cd02517">
    <property type="entry name" value="CMP-KDO-Synthetase"/>
    <property type="match status" value="1"/>
</dbReference>
<dbReference type="FunFam" id="3.90.550.10:FF:000011">
    <property type="entry name" value="3-deoxy-manno-octulosonate cytidylyltransferase"/>
    <property type="match status" value="1"/>
</dbReference>
<dbReference type="Gene3D" id="3.90.550.10">
    <property type="entry name" value="Spore Coat Polysaccharide Biosynthesis Protein SpsA, Chain A"/>
    <property type="match status" value="1"/>
</dbReference>
<dbReference type="HAMAP" id="MF_00057">
    <property type="entry name" value="KdsB"/>
    <property type="match status" value="1"/>
</dbReference>
<dbReference type="InterPro" id="IPR003329">
    <property type="entry name" value="Cytidylyl_trans"/>
</dbReference>
<dbReference type="InterPro" id="IPR004528">
    <property type="entry name" value="KdsB"/>
</dbReference>
<dbReference type="InterPro" id="IPR029044">
    <property type="entry name" value="Nucleotide-diphossugar_trans"/>
</dbReference>
<dbReference type="NCBIfam" id="TIGR00466">
    <property type="entry name" value="kdsB"/>
    <property type="match status" value="1"/>
</dbReference>
<dbReference type="NCBIfam" id="NF003950">
    <property type="entry name" value="PRK05450.1-3"/>
    <property type="match status" value="1"/>
</dbReference>
<dbReference type="NCBIfam" id="NF003952">
    <property type="entry name" value="PRK05450.1-5"/>
    <property type="match status" value="1"/>
</dbReference>
<dbReference type="NCBIfam" id="NF009905">
    <property type="entry name" value="PRK13368.1"/>
    <property type="match status" value="1"/>
</dbReference>
<dbReference type="PANTHER" id="PTHR42866">
    <property type="entry name" value="3-DEOXY-MANNO-OCTULOSONATE CYTIDYLYLTRANSFERASE"/>
    <property type="match status" value="1"/>
</dbReference>
<dbReference type="PANTHER" id="PTHR42866:SF2">
    <property type="entry name" value="3-DEOXY-MANNO-OCTULOSONATE CYTIDYLYLTRANSFERASE, MITOCHONDRIAL"/>
    <property type="match status" value="1"/>
</dbReference>
<dbReference type="Pfam" id="PF02348">
    <property type="entry name" value="CTP_transf_3"/>
    <property type="match status" value="1"/>
</dbReference>
<dbReference type="SUPFAM" id="SSF53448">
    <property type="entry name" value="Nucleotide-diphospho-sugar transferases"/>
    <property type="match status" value="1"/>
</dbReference>
<protein>
    <recommendedName>
        <fullName evidence="1">3-deoxy-manno-octulosonate cytidylyltransferase</fullName>
        <ecNumber evidence="1">2.7.7.38</ecNumber>
    </recommendedName>
    <alternativeName>
        <fullName evidence="1">CMP-2-keto-3-deoxyoctulosonic acid synthase</fullName>
        <shortName evidence="1">CKS</shortName>
        <shortName evidence="1">CMP-KDO synthase</shortName>
    </alternativeName>
</protein>
<feature type="chain" id="PRO_1000003390" description="3-deoxy-manno-octulosonate cytidylyltransferase">
    <location>
        <begin position="1"/>
        <end position="250"/>
    </location>
</feature>
<comment type="function">
    <text evidence="1">Activates KDO (a required 8-carbon sugar) for incorporation into bacterial lipopolysaccharide in Gram-negative bacteria.</text>
</comment>
<comment type="catalytic activity">
    <reaction evidence="1">
        <text>3-deoxy-alpha-D-manno-oct-2-ulosonate + CTP = CMP-3-deoxy-beta-D-manno-octulosonate + diphosphate</text>
        <dbReference type="Rhea" id="RHEA:23448"/>
        <dbReference type="ChEBI" id="CHEBI:33019"/>
        <dbReference type="ChEBI" id="CHEBI:37563"/>
        <dbReference type="ChEBI" id="CHEBI:85986"/>
        <dbReference type="ChEBI" id="CHEBI:85987"/>
        <dbReference type="EC" id="2.7.7.38"/>
    </reaction>
</comment>
<comment type="pathway">
    <text evidence="1">Nucleotide-sugar biosynthesis; CMP-3-deoxy-D-manno-octulosonate biosynthesis; CMP-3-deoxy-D-manno-octulosonate from 3-deoxy-D-manno-octulosonate and CTP: step 1/1.</text>
</comment>
<comment type="pathway">
    <text evidence="1">Bacterial outer membrane biogenesis; lipopolysaccharide biosynthesis.</text>
</comment>
<comment type="subcellular location">
    <subcellularLocation>
        <location evidence="1">Cytoplasm</location>
    </subcellularLocation>
</comment>
<comment type="similarity">
    <text evidence="1">Belongs to the KdsB family.</text>
</comment>
<sequence length="250" mass="27441">MSFIAIIPARYASTRLPGKPLADIAGKPMVVHVMERALESGASQVIVATDHPEVVTAVEAAGGEVCLTRADHQSGTERLAEVIERYGFADDQIIVNVQGDEPLVPPEIIRQVAENLAASSAGMATLAVPIESSEEAFNPNAVKVVMDAQGYALYFSRAAIPWERERFAQSKETIGDCFLRHIGIYAYRAGFVRRYVNWAPSQLEQIELLEQLRVLWYGEKIHVAVAKAVPAVGVDTQEDLDRVRAIMLNK</sequence>
<gene>
    <name evidence="1" type="primary">kdsB</name>
    <name type="ordered locus">YE1550</name>
</gene>
<reference key="1">
    <citation type="journal article" date="2006" name="PLoS Genet.">
        <title>The complete genome sequence and comparative genome analysis of the high pathogenicity Yersinia enterocolitica strain 8081.</title>
        <authorList>
            <person name="Thomson N.R."/>
            <person name="Howard S."/>
            <person name="Wren B.W."/>
            <person name="Holden M.T.G."/>
            <person name="Crossman L."/>
            <person name="Challis G.L."/>
            <person name="Churcher C."/>
            <person name="Mungall K."/>
            <person name="Brooks K."/>
            <person name="Chillingworth T."/>
            <person name="Feltwell T."/>
            <person name="Abdellah Z."/>
            <person name="Hauser H."/>
            <person name="Jagels K."/>
            <person name="Maddison M."/>
            <person name="Moule S."/>
            <person name="Sanders M."/>
            <person name="Whitehead S."/>
            <person name="Quail M.A."/>
            <person name="Dougan G."/>
            <person name="Parkhill J."/>
            <person name="Prentice M.B."/>
        </authorList>
    </citation>
    <scope>NUCLEOTIDE SEQUENCE [LARGE SCALE GENOMIC DNA]</scope>
    <source>
        <strain>NCTC 13174 / 8081</strain>
    </source>
</reference>
<organism>
    <name type="scientific">Yersinia enterocolitica serotype O:8 / biotype 1B (strain NCTC 13174 / 8081)</name>
    <dbReference type="NCBI Taxonomy" id="393305"/>
    <lineage>
        <taxon>Bacteria</taxon>
        <taxon>Pseudomonadati</taxon>
        <taxon>Pseudomonadota</taxon>
        <taxon>Gammaproteobacteria</taxon>
        <taxon>Enterobacterales</taxon>
        <taxon>Yersiniaceae</taxon>
        <taxon>Yersinia</taxon>
    </lineage>
</organism>